<reference key="1">
    <citation type="journal article" date="1999" name="Nature">
        <title>Sequence and analysis of chromosome 4 of the plant Arabidopsis thaliana.</title>
        <authorList>
            <person name="Mayer K.F.X."/>
            <person name="Schueller C."/>
            <person name="Wambutt R."/>
            <person name="Murphy G."/>
            <person name="Volckaert G."/>
            <person name="Pohl T."/>
            <person name="Duesterhoeft A."/>
            <person name="Stiekema W."/>
            <person name="Entian K.-D."/>
            <person name="Terryn N."/>
            <person name="Harris B."/>
            <person name="Ansorge W."/>
            <person name="Brandt P."/>
            <person name="Grivell L.A."/>
            <person name="Rieger M."/>
            <person name="Weichselgartner M."/>
            <person name="de Simone V."/>
            <person name="Obermaier B."/>
            <person name="Mache R."/>
            <person name="Mueller M."/>
            <person name="Kreis M."/>
            <person name="Delseny M."/>
            <person name="Puigdomenech P."/>
            <person name="Watson M."/>
            <person name="Schmidtheini T."/>
            <person name="Reichert B."/>
            <person name="Portetelle D."/>
            <person name="Perez-Alonso M."/>
            <person name="Boutry M."/>
            <person name="Bancroft I."/>
            <person name="Vos P."/>
            <person name="Hoheisel J."/>
            <person name="Zimmermann W."/>
            <person name="Wedler H."/>
            <person name="Ridley P."/>
            <person name="Langham S.-A."/>
            <person name="McCullagh B."/>
            <person name="Bilham L."/>
            <person name="Robben J."/>
            <person name="van der Schueren J."/>
            <person name="Grymonprez B."/>
            <person name="Chuang Y.-J."/>
            <person name="Vandenbussche F."/>
            <person name="Braeken M."/>
            <person name="Weltjens I."/>
            <person name="Voet M."/>
            <person name="Bastiaens I."/>
            <person name="Aert R."/>
            <person name="Defoor E."/>
            <person name="Weitzenegger T."/>
            <person name="Bothe G."/>
            <person name="Ramsperger U."/>
            <person name="Hilbert H."/>
            <person name="Braun M."/>
            <person name="Holzer E."/>
            <person name="Brandt A."/>
            <person name="Peters S."/>
            <person name="van Staveren M."/>
            <person name="Dirkse W."/>
            <person name="Mooijman P."/>
            <person name="Klein Lankhorst R."/>
            <person name="Rose M."/>
            <person name="Hauf J."/>
            <person name="Koetter P."/>
            <person name="Berneiser S."/>
            <person name="Hempel S."/>
            <person name="Feldpausch M."/>
            <person name="Lamberth S."/>
            <person name="Van den Daele H."/>
            <person name="De Keyser A."/>
            <person name="Buysshaert C."/>
            <person name="Gielen J."/>
            <person name="Villarroel R."/>
            <person name="De Clercq R."/>
            <person name="van Montagu M."/>
            <person name="Rogers J."/>
            <person name="Cronin A."/>
            <person name="Quail M.A."/>
            <person name="Bray-Allen S."/>
            <person name="Clark L."/>
            <person name="Doggett J."/>
            <person name="Hall S."/>
            <person name="Kay M."/>
            <person name="Lennard N."/>
            <person name="McLay K."/>
            <person name="Mayes R."/>
            <person name="Pettett A."/>
            <person name="Rajandream M.A."/>
            <person name="Lyne M."/>
            <person name="Benes V."/>
            <person name="Rechmann S."/>
            <person name="Borkova D."/>
            <person name="Bloecker H."/>
            <person name="Scharfe M."/>
            <person name="Grimm M."/>
            <person name="Loehnert T.-H."/>
            <person name="Dose S."/>
            <person name="de Haan M."/>
            <person name="Maarse A.C."/>
            <person name="Schaefer M."/>
            <person name="Mueller-Auer S."/>
            <person name="Gabel C."/>
            <person name="Fuchs M."/>
            <person name="Fartmann B."/>
            <person name="Granderath K."/>
            <person name="Dauner D."/>
            <person name="Herzl A."/>
            <person name="Neumann S."/>
            <person name="Argiriou A."/>
            <person name="Vitale D."/>
            <person name="Liguori R."/>
            <person name="Piravandi E."/>
            <person name="Massenet O."/>
            <person name="Quigley F."/>
            <person name="Clabauld G."/>
            <person name="Muendlein A."/>
            <person name="Felber R."/>
            <person name="Schnabl S."/>
            <person name="Hiller R."/>
            <person name="Schmidt W."/>
            <person name="Lecharny A."/>
            <person name="Aubourg S."/>
            <person name="Chefdor F."/>
            <person name="Cooke R."/>
            <person name="Berger C."/>
            <person name="Monfort A."/>
            <person name="Casacuberta E."/>
            <person name="Gibbons T."/>
            <person name="Weber N."/>
            <person name="Vandenbol M."/>
            <person name="Bargues M."/>
            <person name="Terol J."/>
            <person name="Torres A."/>
            <person name="Perez-Perez A."/>
            <person name="Purnelle B."/>
            <person name="Bent E."/>
            <person name="Johnson S."/>
            <person name="Tacon D."/>
            <person name="Jesse T."/>
            <person name="Heijnen L."/>
            <person name="Schwarz S."/>
            <person name="Scholler P."/>
            <person name="Heber S."/>
            <person name="Francs P."/>
            <person name="Bielke C."/>
            <person name="Frishman D."/>
            <person name="Haase D."/>
            <person name="Lemcke K."/>
            <person name="Mewes H.-W."/>
            <person name="Stocker S."/>
            <person name="Zaccaria P."/>
            <person name="Bevan M."/>
            <person name="Wilson R.K."/>
            <person name="de la Bastide M."/>
            <person name="Habermann K."/>
            <person name="Parnell L."/>
            <person name="Dedhia N."/>
            <person name="Gnoj L."/>
            <person name="Schutz K."/>
            <person name="Huang E."/>
            <person name="Spiegel L."/>
            <person name="Sekhon M."/>
            <person name="Murray J."/>
            <person name="Sheet P."/>
            <person name="Cordes M."/>
            <person name="Abu-Threideh J."/>
            <person name="Stoneking T."/>
            <person name="Kalicki J."/>
            <person name="Graves T."/>
            <person name="Harmon G."/>
            <person name="Edwards J."/>
            <person name="Latreille P."/>
            <person name="Courtney L."/>
            <person name="Cloud J."/>
            <person name="Abbott A."/>
            <person name="Scott K."/>
            <person name="Johnson D."/>
            <person name="Minx P."/>
            <person name="Bentley D."/>
            <person name="Fulton B."/>
            <person name="Miller N."/>
            <person name="Greco T."/>
            <person name="Kemp K."/>
            <person name="Kramer J."/>
            <person name="Fulton L."/>
            <person name="Mardis E."/>
            <person name="Dante M."/>
            <person name="Pepin K."/>
            <person name="Hillier L.W."/>
            <person name="Nelson J."/>
            <person name="Spieth J."/>
            <person name="Ryan E."/>
            <person name="Andrews S."/>
            <person name="Geisel C."/>
            <person name="Layman D."/>
            <person name="Du H."/>
            <person name="Ali J."/>
            <person name="Berghoff A."/>
            <person name="Jones K."/>
            <person name="Drone K."/>
            <person name="Cotton M."/>
            <person name="Joshu C."/>
            <person name="Antonoiu B."/>
            <person name="Zidanic M."/>
            <person name="Strong C."/>
            <person name="Sun H."/>
            <person name="Lamar B."/>
            <person name="Yordan C."/>
            <person name="Ma P."/>
            <person name="Zhong J."/>
            <person name="Preston R."/>
            <person name="Vil D."/>
            <person name="Shekher M."/>
            <person name="Matero A."/>
            <person name="Shah R."/>
            <person name="Swaby I.K."/>
            <person name="O'Shaughnessy A."/>
            <person name="Rodriguez M."/>
            <person name="Hoffman J."/>
            <person name="Till S."/>
            <person name="Granat S."/>
            <person name="Shohdy N."/>
            <person name="Hasegawa A."/>
            <person name="Hameed A."/>
            <person name="Lodhi M."/>
            <person name="Johnson A."/>
            <person name="Chen E."/>
            <person name="Marra M.A."/>
            <person name="Martienssen R."/>
            <person name="McCombie W.R."/>
        </authorList>
    </citation>
    <scope>NUCLEOTIDE SEQUENCE [LARGE SCALE GENOMIC DNA]</scope>
    <source>
        <strain>cv. Columbia</strain>
    </source>
</reference>
<reference key="2">
    <citation type="journal article" date="2017" name="Plant J.">
        <title>Araport11: a complete reannotation of the Arabidopsis thaliana reference genome.</title>
        <authorList>
            <person name="Cheng C.Y."/>
            <person name="Krishnakumar V."/>
            <person name="Chan A.P."/>
            <person name="Thibaud-Nissen F."/>
            <person name="Schobel S."/>
            <person name="Town C.D."/>
        </authorList>
    </citation>
    <scope>GENOME REANNOTATION</scope>
    <source>
        <strain>cv. Columbia</strain>
    </source>
</reference>
<reference key="3">
    <citation type="journal article" date="2003" name="Science">
        <title>Empirical analysis of transcriptional activity in the Arabidopsis genome.</title>
        <authorList>
            <person name="Yamada K."/>
            <person name="Lim J."/>
            <person name="Dale J.M."/>
            <person name="Chen H."/>
            <person name="Shinn P."/>
            <person name="Palm C.J."/>
            <person name="Southwick A.M."/>
            <person name="Wu H.C."/>
            <person name="Kim C.J."/>
            <person name="Nguyen M."/>
            <person name="Pham P.K."/>
            <person name="Cheuk R.F."/>
            <person name="Karlin-Newmann G."/>
            <person name="Liu S.X."/>
            <person name="Lam B."/>
            <person name="Sakano H."/>
            <person name="Wu T."/>
            <person name="Yu G."/>
            <person name="Miranda M."/>
            <person name="Quach H.L."/>
            <person name="Tripp M."/>
            <person name="Chang C.H."/>
            <person name="Lee J.M."/>
            <person name="Toriumi M.J."/>
            <person name="Chan M.M."/>
            <person name="Tang C.C."/>
            <person name="Onodera C.S."/>
            <person name="Deng J.M."/>
            <person name="Akiyama K."/>
            <person name="Ansari Y."/>
            <person name="Arakawa T."/>
            <person name="Banh J."/>
            <person name="Banno F."/>
            <person name="Bowser L."/>
            <person name="Brooks S.Y."/>
            <person name="Carninci P."/>
            <person name="Chao Q."/>
            <person name="Choy N."/>
            <person name="Enju A."/>
            <person name="Goldsmith A.D."/>
            <person name="Gurjal M."/>
            <person name="Hansen N.F."/>
            <person name="Hayashizaki Y."/>
            <person name="Johnson-Hopson C."/>
            <person name="Hsuan V.W."/>
            <person name="Iida K."/>
            <person name="Karnes M."/>
            <person name="Khan S."/>
            <person name="Koesema E."/>
            <person name="Ishida J."/>
            <person name="Jiang P.X."/>
            <person name="Jones T."/>
            <person name="Kawai J."/>
            <person name="Kamiya A."/>
            <person name="Meyers C."/>
            <person name="Nakajima M."/>
            <person name="Narusaka M."/>
            <person name="Seki M."/>
            <person name="Sakurai T."/>
            <person name="Satou M."/>
            <person name="Tamse R."/>
            <person name="Vaysberg M."/>
            <person name="Wallender E.K."/>
            <person name="Wong C."/>
            <person name="Yamamura Y."/>
            <person name="Yuan S."/>
            <person name="Shinozaki K."/>
            <person name="Davis R.W."/>
            <person name="Theologis A."/>
            <person name="Ecker J.R."/>
        </authorList>
    </citation>
    <scope>NUCLEOTIDE SEQUENCE [LARGE SCALE MRNA]</scope>
    <source>
        <strain>cv. Columbia</strain>
    </source>
</reference>
<reference key="4">
    <citation type="online journal article" date="2000" name="Plant Gene Register">
        <title>Isolation of clathrin-coated vesicle beta-adaptin homologs from Arabidopsis thaliana.</title>
        <authorList>
            <person name="Holstein S.E.H."/>
            <person name="Happel N."/>
        </authorList>
        <locator>PGR00-028</locator>
    </citation>
    <scope>NUCLEOTIDE SEQUENCE [MRNA] OF 4-893</scope>
    <source>
        <strain>cv. Columbia</strain>
    </source>
</reference>
<reference key="5">
    <citation type="journal article" date="2001" name="Mol. Biol. Cell">
        <title>Adaptins: the final recount.</title>
        <authorList>
            <person name="Boehm M."/>
            <person name="Bonifacino J.S."/>
        </authorList>
    </citation>
    <scope>GENE FAMILY</scope>
    <scope>REVIEW</scope>
</reference>
<reference key="6">
    <citation type="journal article" date="2013" name="Plant Cell Physiol.">
        <title>The AP-1 mu adaptin is required for KNOLLE localization at the cell plate to mediate cytokinesis in Arabidopsis.</title>
        <authorList>
            <person name="Teh O.K."/>
            <person name="Shimono Y."/>
            <person name="Shirakawa M."/>
            <person name="Fukao Y."/>
            <person name="Tamura K."/>
            <person name="Shimada T."/>
            <person name="Hara-Nishimura I."/>
        </authorList>
    </citation>
    <scope>IDENTIFICATION BY MASS SPECTROMETRY</scope>
    <scope>COMPONENT OF THE AP-1 COMPLEX</scope>
</reference>
<accession>O81742</accession>
<accession>Q8VZF2</accession>
<accession>Q9M649</accession>
<evidence type="ECO:0000250" key="1"/>
<evidence type="ECO:0000256" key="2">
    <source>
        <dbReference type="SAM" id="MobiDB-lite"/>
    </source>
</evidence>
<evidence type="ECO:0000305" key="3"/>
<name>APBLC_ARATH</name>
<dbReference type="EMBL" id="AL031326">
    <property type="protein sequence ID" value="CAA20467.1"/>
    <property type="status" value="ALT_SEQ"/>
    <property type="molecule type" value="Genomic_DNA"/>
</dbReference>
<dbReference type="EMBL" id="AL161559">
    <property type="protein sequence ID" value="CAB79301.1"/>
    <property type="status" value="ALT_SEQ"/>
    <property type="molecule type" value="Genomic_DNA"/>
</dbReference>
<dbReference type="EMBL" id="CP002687">
    <property type="protein sequence ID" value="AEE84761.1"/>
    <property type="molecule type" value="Genomic_DNA"/>
</dbReference>
<dbReference type="EMBL" id="AY065000">
    <property type="protein sequence ID" value="AAL57648.1"/>
    <property type="molecule type" value="mRNA"/>
</dbReference>
<dbReference type="EMBL" id="AF216387">
    <property type="protein sequence ID" value="AAF61673.1"/>
    <property type="molecule type" value="mRNA"/>
</dbReference>
<dbReference type="PIR" id="T05384">
    <property type="entry name" value="T05384"/>
</dbReference>
<dbReference type="RefSeq" id="NP_194077.1">
    <property type="nucleotide sequence ID" value="NM_118475.4"/>
</dbReference>
<dbReference type="SMR" id="O81742"/>
<dbReference type="BioGRID" id="13734">
    <property type="interactions" value="14"/>
</dbReference>
<dbReference type="FunCoup" id="O81742">
    <property type="interactions" value="4564"/>
</dbReference>
<dbReference type="STRING" id="3702.O81742"/>
<dbReference type="iPTMnet" id="O81742"/>
<dbReference type="PaxDb" id="3702-AT4G23460.1"/>
<dbReference type="EnsemblPlants" id="AT4G23460.1">
    <property type="protein sequence ID" value="AT4G23460.1"/>
    <property type="gene ID" value="AT4G23460"/>
</dbReference>
<dbReference type="GeneID" id="828445"/>
<dbReference type="Gramene" id="AT4G23460.1">
    <property type="protein sequence ID" value="AT4G23460.1"/>
    <property type="gene ID" value="AT4G23460"/>
</dbReference>
<dbReference type="KEGG" id="ath:AT4G23460"/>
<dbReference type="Araport" id="AT4G23460"/>
<dbReference type="TAIR" id="AT4G23460"/>
<dbReference type="eggNOG" id="KOG1061">
    <property type="taxonomic scope" value="Eukaryota"/>
</dbReference>
<dbReference type="HOGENOM" id="CLU_006320_1_1_1"/>
<dbReference type="InParanoid" id="O81742"/>
<dbReference type="OMA" id="XYESIIA"/>
<dbReference type="OrthoDB" id="10254310at2759"/>
<dbReference type="PhylomeDB" id="O81742"/>
<dbReference type="PRO" id="PR:O81742"/>
<dbReference type="Proteomes" id="UP000006548">
    <property type="component" value="Chromosome 4"/>
</dbReference>
<dbReference type="ExpressionAtlas" id="O81742">
    <property type="expression patterns" value="baseline and differential"/>
</dbReference>
<dbReference type="GO" id="GO:0030131">
    <property type="term" value="C:clathrin adaptor complex"/>
    <property type="evidence" value="ECO:0007669"/>
    <property type="project" value="InterPro"/>
</dbReference>
<dbReference type="GO" id="GO:0030665">
    <property type="term" value="C:clathrin-coated vesicle membrane"/>
    <property type="evidence" value="ECO:0007669"/>
    <property type="project" value="UniProtKB-SubCell"/>
</dbReference>
<dbReference type="GO" id="GO:0005829">
    <property type="term" value="C:cytosol"/>
    <property type="evidence" value="ECO:0007005"/>
    <property type="project" value="TAIR"/>
</dbReference>
<dbReference type="GO" id="GO:0005794">
    <property type="term" value="C:Golgi apparatus"/>
    <property type="evidence" value="ECO:0007669"/>
    <property type="project" value="UniProtKB-SubCell"/>
</dbReference>
<dbReference type="GO" id="GO:0005886">
    <property type="term" value="C:plasma membrane"/>
    <property type="evidence" value="ECO:0007005"/>
    <property type="project" value="TAIR"/>
</dbReference>
<dbReference type="GO" id="GO:0009506">
    <property type="term" value="C:plasmodesma"/>
    <property type="evidence" value="ECO:0007005"/>
    <property type="project" value="TAIR"/>
</dbReference>
<dbReference type="GO" id="GO:0030276">
    <property type="term" value="F:clathrin binding"/>
    <property type="evidence" value="ECO:0007669"/>
    <property type="project" value="InterPro"/>
</dbReference>
<dbReference type="GO" id="GO:0006886">
    <property type="term" value="P:intracellular protein transport"/>
    <property type="evidence" value="ECO:0007669"/>
    <property type="project" value="InterPro"/>
</dbReference>
<dbReference type="GO" id="GO:0016192">
    <property type="term" value="P:vesicle-mediated transport"/>
    <property type="evidence" value="ECO:0007669"/>
    <property type="project" value="InterPro"/>
</dbReference>
<dbReference type="FunFam" id="1.25.10.10:FF:000002">
    <property type="entry name" value="AP complex subunit beta"/>
    <property type="match status" value="1"/>
</dbReference>
<dbReference type="FunFam" id="3.30.310.10:FF:000012">
    <property type="entry name" value="Beta-adaptin-like protein"/>
    <property type="match status" value="1"/>
</dbReference>
<dbReference type="FunFam" id="2.60.40.1150:FF:000002">
    <property type="entry name" value="Beta-adaptin-like protein C"/>
    <property type="match status" value="1"/>
</dbReference>
<dbReference type="Gene3D" id="2.60.40.1150">
    <property type="match status" value="1"/>
</dbReference>
<dbReference type="Gene3D" id="1.25.10.10">
    <property type="entry name" value="Leucine-rich Repeat Variant"/>
    <property type="match status" value="1"/>
</dbReference>
<dbReference type="Gene3D" id="3.30.310.10">
    <property type="entry name" value="TATA-Binding Protein"/>
    <property type="match status" value="1"/>
</dbReference>
<dbReference type="InterPro" id="IPR026739">
    <property type="entry name" value="AP_beta"/>
</dbReference>
<dbReference type="InterPro" id="IPR016342">
    <property type="entry name" value="AP_complex_bsu_1_2_4"/>
</dbReference>
<dbReference type="InterPro" id="IPR011989">
    <property type="entry name" value="ARM-like"/>
</dbReference>
<dbReference type="InterPro" id="IPR016024">
    <property type="entry name" value="ARM-type_fold"/>
</dbReference>
<dbReference type="InterPro" id="IPR015151">
    <property type="entry name" value="B-adaptin_app_sub_C"/>
</dbReference>
<dbReference type="InterPro" id="IPR002553">
    <property type="entry name" value="Clathrin/coatomer_adapt-like_N"/>
</dbReference>
<dbReference type="InterPro" id="IPR008152">
    <property type="entry name" value="Clathrin_a/b/g-adaptin_app_Ig"/>
</dbReference>
<dbReference type="InterPro" id="IPR013041">
    <property type="entry name" value="Clathrin_app_Ig-like_sf"/>
</dbReference>
<dbReference type="InterPro" id="IPR013037">
    <property type="entry name" value="Clathrin_b-adaptin_app_Ig-like"/>
</dbReference>
<dbReference type="InterPro" id="IPR009028">
    <property type="entry name" value="Coatomer/calthrin_app_sub_C"/>
</dbReference>
<dbReference type="InterPro" id="IPR012295">
    <property type="entry name" value="TBP_dom_sf"/>
</dbReference>
<dbReference type="PANTHER" id="PTHR11134">
    <property type="entry name" value="ADAPTOR COMPLEX SUBUNIT BETA FAMILY MEMBER"/>
    <property type="match status" value="1"/>
</dbReference>
<dbReference type="Pfam" id="PF01602">
    <property type="entry name" value="Adaptin_N"/>
    <property type="match status" value="1"/>
</dbReference>
<dbReference type="Pfam" id="PF02883">
    <property type="entry name" value="Alpha_adaptinC2"/>
    <property type="match status" value="1"/>
</dbReference>
<dbReference type="Pfam" id="PF09066">
    <property type="entry name" value="B2-adapt-app_C"/>
    <property type="match status" value="1"/>
</dbReference>
<dbReference type="PIRSF" id="PIRSF002291">
    <property type="entry name" value="AP_complex_beta"/>
    <property type="match status" value="1"/>
</dbReference>
<dbReference type="SMART" id="SM00809">
    <property type="entry name" value="Alpha_adaptinC2"/>
    <property type="match status" value="1"/>
</dbReference>
<dbReference type="SMART" id="SM01020">
    <property type="entry name" value="B2-adapt-app_C"/>
    <property type="match status" value="1"/>
</dbReference>
<dbReference type="SUPFAM" id="SSF48371">
    <property type="entry name" value="ARM repeat"/>
    <property type="match status" value="1"/>
</dbReference>
<dbReference type="SUPFAM" id="SSF49348">
    <property type="entry name" value="Clathrin adaptor appendage domain"/>
    <property type="match status" value="1"/>
</dbReference>
<dbReference type="SUPFAM" id="SSF55711">
    <property type="entry name" value="Subdomain of clathrin and coatomer appendage domain"/>
    <property type="match status" value="1"/>
</dbReference>
<comment type="function">
    <text evidence="1">Subunit of clathrin-associated adaptor protein complex that plays a role in protein sorting in the late-Golgi/trans-Golgi network (TGN) and/or endosomes. The AP complexes mediate both the recruitment of clathrin to membranes and the recognition of sorting signals within the cytosolic tails of transmembrane cargo molecules (By similarity).</text>
</comment>
<comment type="subunit">
    <text>Adaptor protein complexes are heterotetramers composed of two large adaptins (beta-type subunit and alpha-type or delta-type or epsilon-type or gamma-type subunit), a medium adaptin (mu-type subunit) and a small adaptin (sigma-type subunit).</text>
</comment>
<comment type="subcellular location">
    <subcellularLocation>
        <location evidence="1">Golgi apparatus</location>
    </subcellularLocation>
    <subcellularLocation>
        <location evidence="1">Golgi apparatus</location>
        <location evidence="1">trans-Golgi network</location>
    </subcellularLocation>
    <subcellularLocation>
        <location evidence="1">Cytoplasmic vesicle</location>
        <location evidence="1">Clathrin-coated vesicle membrane</location>
        <topology evidence="1">Peripheral membrane protein</topology>
        <orientation evidence="1">Cytoplasmic side</orientation>
    </subcellularLocation>
    <text evidence="1">Associated with the trans-Golgi network. Component of the coat surrounding the cytoplasmic face of coated vesicles located at the Golgi complex (By similarity).</text>
</comment>
<comment type="similarity">
    <text evidence="3">Belongs to the adaptor complexes large subunit family.</text>
</comment>
<comment type="sequence caution" evidence="3">
    <conflict type="erroneous gene model prediction">
        <sequence resource="EMBL-CDS" id="CAA20467"/>
    </conflict>
</comment>
<comment type="sequence caution" evidence="3">
    <conflict type="erroneous gene model prediction">
        <sequence resource="EMBL-CDS" id="CAB79301"/>
    </conflict>
</comment>
<sequence length="893" mass="99097">MSGHDSKYFSTTKKGEIPELKEELNSQYKDKRKDAVKKVIAAMTVGKDVSSLFTDVVNCMQTENLELKKLVYLYLINYAKSQPDLAILAVNTFVKDSQDPNPLIRALAVRTMGCIRVDKITEYLCDPLQKCLKDDDPYVRKTAAICVAKLFDINAELVEDRGFLEALKDLISDNNPMVVANAVAALAEIQENSTSPIFEINSTILTKLLTALNECTEWGQVFILDALSRYKASDPREAENIVERVTPRLQHANCAVVLSAVKMILQQMELITSTDVIRNLCKKMAPPLVTLLSAEPEIQYVALRNINLIVQKRPTILAHEIKVFFCKYNDPIYVKMEKLEIMIKLASDRNIDQVLLEFKEYATEVDVDFVRKAVRAIGRCAIKLERAAERCISVLLELIKIKVNYVVQEAIIVIKDIFRRYPNTYESIIATLCESLDTLDEPEAKASMIWIIGEYAERIDNADELLESFLENFPEEPAQVQLQLLTATVKLFLKKPTEGPQQMIQVVLNNATVETDNPDLRDRAYIYWRLLSTDPEAAKDVVLAEKPVITDDSNQLDPSLLDELLANISTLSSVYHKPPEAFVTRLKTTVQKTEDEDYVEGSETGYPEASGNPVDGAASPSATTGYVTKLAAAPAPVPDLLGDLMGSDNAAIVPVDEPTTPSGRPLPVVLPASKGQGLQISAQLTRQDGQVFYSMLLENNSQSLLDGFMIQFNKNSFGLAAVGSLQVPPLQPGASARTMMPMVLSQNMSTGSTSSVLQVAVKNNQQPVWYFEDKIVLNALFSEDGRMERGTFLETWKSLPDSNEVQKEFPGITITSVESTLDLLAASNMFFIAKRKNGNQDVLYLSAKVPRGIPFLIELTAIVGQPGLKCAVKTPTPEIAPLFFEAVEILFKA</sequence>
<keyword id="KW-0968">Cytoplasmic vesicle</keyword>
<keyword id="KW-0333">Golgi apparatus</keyword>
<keyword id="KW-0472">Membrane</keyword>
<keyword id="KW-0653">Protein transport</keyword>
<keyword id="KW-1185">Reference proteome</keyword>
<keyword id="KW-0813">Transport</keyword>
<protein>
    <recommendedName>
        <fullName>Beta-adaptin-like protein C</fullName>
        <shortName>At-bC-Ad</shortName>
        <shortName>At-betaC-Ad</shortName>
    </recommendedName>
    <alternativeName>
        <fullName>AP complex subunit beta-C</fullName>
    </alternativeName>
    <alternativeName>
        <fullName>Adaptor protein complex AP subunit beta-C</fullName>
    </alternativeName>
    <alternativeName>
        <fullName>Beta-adaptin C</fullName>
    </alternativeName>
    <alternativeName>
        <fullName>Clathrin assembly protein complex beta large chain C</fullName>
    </alternativeName>
</protein>
<feature type="chain" id="PRO_0000397850" description="Beta-adaptin-like protein C">
    <location>
        <begin position="1"/>
        <end position="893"/>
    </location>
</feature>
<feature type="region of interest" description="Disordered" evidence="2">
    <location>
        <begin position="593"/>
        <end position="621"/>
    </location>
</feature>
<feature type="sequence conflict" description="In Ref. 3; AAL57648." evidence="3" ref="3">
    <original>A</original>
    <variation>T</variation>
    <location>
        <position position="166"/>
    </location>
</feature>
<feature type="sequence conflict" description="In Ref. 3; AAL57648." evidence="3" ref="3">
    <original>I</original>
    <variation>N</variation>
    <location>
        <position position="241"/>
    </location>
</feature>
<feature type="sequence conflict" description="In Ref. 4; AAF61673." evidence="3" ref="4">
    <original>L</original>
    <variation>P</variation>
    <location>
        <position position="845"/>
    </location>
</feature>
<feature type="sequence conflict" description="In Ref. 4; AAF61673." evidence="3" ref="4">
    <original>F</original>
    <variation>I</variation>
    <location>
        <position position="883"/>
    </location>
</feature>
<gene>
    <name type="primary">BETAC-AD</name>
    <name type="ordered locus">At4g23460</name>
    <name type="ORF">F16G20.160</name>
</gene>
<proteinExistence type="evidence at protein level"/>
<organism>
    <name type="scientific">Arabidopsis thaliana</name>
    <name type="common">Mouse-ear cress</name>
    <dbReference type="NCBI Taxonomy" id="3702"/>
    <lineage>
        <taxon>Eukaryota</taxon>
        <taxon>Viridiplantae</taxon>
        <taxon>Streptophyta</taxon>
        <taxon>Embryophyta</taxon>
        <taxon>Tracheophyta</taxon>
        <taxon>Spermatophyta</taxon>
        <taxon>Magnoliopsida</taxon>
        <taxon>eudicotyledons</taxon>
        <taxon>Gunneridae</taxon>
        <taxon>Pentapetalae</taxon>
        <taxon>rosids</taxon>
        <taxon>malvids</taxon>
        <taxon>Brassicales</taxon>
        <taxon>Brassicaceae</taxon>
        <taxon>Camelineae</taxon>
        <taxon>Arabidopsis</taxon>
    </lineage>
</organism>